<evidence type="ECO:0000255" key="1">
    <source>
        <dbReference type="HAMAP-Rule" id="MF_00472"/>
    </source>
</evidence>
<keyword id="KW-0489">Methyltransferase</keyword>
<keyword id="KW-1185">Reference proteome</keyword>
<keyword id="KW-0949">S-adenosyl-L-methionine</keyword>
<keyword id="KW-0808">Transferase</keyword>
<keyword id="KW-0831">Ubiquinone biosynthesis</keyword>
<sequence>MTMSQDSRSTPGSTVDPAEIAKFSKLSETWWDPKGKMAPLHKINPLRLTYIRDAACRKFERNAKSLNCLSGLRMLDIGCGAGLLCEPFTRLGAQVVGVDPSASNIAAAKLHAEKGHMSIDYRCTTIEEMDPRERFDIVLAMEVVEHVTDVGAFLGRCAAVLKPGGLMVVSTLNRNWKSFALAIVGAEYVLRWLPRGTHEWSKFVTPDELTKYLLDNRLVITEQSGVVYSPFADRWSLSSDMDVNYMVVAEQMV</sequence>
<feature type="chain" id="PRO_1000013891" description="Ubiquinone biosynthesis O-methyltransferase">
    <location>
        <begin position="1"/>
        <end position="253"/>
    </location>
</feature>
<feature type="binding site" evidence="1">
    <location>
        <position position="47"/>
    </location>
    <ligand>
        <name>S-adenosyl-L-methionine</name>
        <dbReference type="ChEBI" id="CHEBI:59789"/>
    </ligand>
</feature>
<feature type="binding site" evidence="1">
    <location>
        <position position="78"/>
    </location>
    <ligand>
        <name>S-adenosyl-L-methionine</name>
        <dbReference type="ChEBI" id="CHEBI:59789"/>
    </ligand>
</feature>
<feature type="binding site" evidence="1">
    <location>
        <position position="99"/>
    </location>
    <ligand>
        <name>S-adenosyl-L-methionine</name>
        <dbReference type="ChEBI" id="CHEBI:59789"/>
    </ligand>
</feature>
<feature type="binding site" evidence="1">
    <location>
        <position position="141"/>
    </location>
    <ligand>
        <name>S-adenosyl-L-methionine</name>
        <dbReference type="ChEBI" id="CHEBI:59789"/>
    </ligand>
</feature>
<accession>A4YKT6</accession>
<name>UBIG_BRASO</name>
<protein>
    <recommendedName>
        <fullName evidence="1">Ubiquinone biosynthesis O-methyltransferase</fullName>
    </recommendedName>
    <alternativeName>
        <fullName evidence="1">2-polyprenyl-6-hydroxyphenol methylase</fullName>
        <ecNumber evidence="1">2.1.1.222</ecNumber>
    </alternativeName>
    <alternativeName>
        <fullName evidence="1">3-demethylubiquinone 3-O-methyltransferase</fullName>
        <ecNumber evidence="1">2.1.1.64</ecNumber>
    </alternativeName>
</protein>
<dbReference type="EC" id="2.1.1.222" evidence="1"/>
<dbReference type="EC" id="2.1.1.64" evidence="1"/>
<dbReference type="EMBL" id="CU234118">
    <property type="protein sequence ID" value="CAL74512.1"/>
    <property type="molecule type" value="Genomic_DNA"/>
</dbReference>
<dbReference type="SMR" id="A4YKT6"/>
<dbReference type="STRING" id="114615.BRADO0576"/>
<dbReference type="KEGG" id="bra:BRADO0576"/>
<dbReference type="eggNOG" id="COG2227">
    <property type="taxonomic scope" value="Bacteria"/>
</dbReference>
<dbReference type="HOGENOM" id="CLU_042432_0_0_5"/>
<dbReference type="UniPathway" id="UPA00232"/>
<dbReference type="Proteomes" id="UP000001994">
    <property type="component" value="Chromosome"/>
</dbReference>
<dbReference type="GO" id="GO:0102208">
    <property type="term" value="F:2-polyprenyl-6-hydroxyphenol methylase activity"/>
    <property type="evidence" value="ECO:0007669"/>
    <property type="project" value="UniProtKB-EC"/>
</dbReference>
<dbReference type="GO" id="GO:0061542">
    <property type="term" value="F:3-demethylubiquinol 3-O-methyltransferase activity"/>
    <property type="evidence" value="ECO:0007669"/>
    <property type="project" value="UniProtKB-UniRule"/>
</dbReference>
<dbReference type="GO" id="GO:0010420">
    <property type="term" value="F:polyprenyldihydroxybenzoate methyltransferase activity"/>
    <property type="evidence" value="ECO:0007669"/>
    <property type="project" value="InterPro"/>
</dbReference>
<dbReference type="GO" id="GO:0032259">
    <property type="term" value="P:methylation"/>
    <property type="evidence" value="ECO:0007669"/>
    <property type="project" value="UniProtKB-KW"/>
</dbReference>
<dbReference type="CDD" id="cd02440">
    <property type="entry name" value="AdoMet_MTases"/>
    <property type="match status" value="1"/>
</dbReference>
<dbReference type="Gene3D" id="3.40.50.150">
    <property type="entry name" value="Vaccinia Virus protein VP39"/>
    <property type="match status" value="1"/>
</dbReference>
<dbReference type="HAMAP" id="MF_00472">
    <property type="entry name" value="UbiG"/>
    <property type="match status" value="1"/>
</dbReference>
<dbReference type="InterPro" id="IPR029063">
    <property type="entry name" value="SAM-dependent_MTases_sf"/>
</dbReference>
<dbReference type="InterPro" id="IPR010233">
    <property type="entry name" value="UbiG_MeTrfase"/>
</dbReference>
<dbReference type="NCBIfam" id="TIGR01983">
    <property type="entry name" value="UbiG"/>
    <property type="match status" value="1"/>
</dbReference>
<dbReference type="PANTHER" id="PTHR43464">
    <property type="entry name" value="METHYLTRANSFERASE"/>
    <property type="match status" value="1"/>
</dbReference>
<dbReference type="PANTHER" id="PTHR43464:SF19">
    <property type="entry name" value="UBIQUINONE BIOSYNTHESIS O-METHYLTRANSFERASE, MITOCHONDRIAL"/>
    <property type="match status" value="1"/>
</dbReference>
<dbReference type="Pfam" id="PF13489">
    <property type="entry name" value="Methyltransf_23"/>
    <property type="match status" value="1"/>
</dbReference>
<dbReference type="SUPFAM" id="SSF53335">
    <property type="entry name" value="S-adenosyl-L-methionine-dependent methyltransferases"/>
    <property type="match status" value="1"/>
</dbReference>
<organism>
    <name type="scientific">Bradyrhizobium sp. (strain ORS 278)</name>
    <dbReference type="NCBI Taxonomy" id="114615"/>
    <lineage>
        <taxon>Bacteria</taxon>
        <taxon>Pseudomonadati</taxon>
        <taxon>Pseudomonadota</taxon>
        <taxon>Alphaproteobacteria</taxon>
        <taxon>Hyphomicrobiales</taxon>
        <taxon>Nitrobacteraceae</taxon>
        <taxon>Bradyrhizobium</taxon>
    </lineage>
</organism>
<proteinExistence type="inferred from homology"/>
<reference key="1">
    <citation type="journal article" date="2007" name="Science">
        <title>Legumes symbioses: absence of nod genes in photosynthetic bradyrhizobia.</title>
        <authorList>
            <person name="Giraud E."/>
            <person name="Moulin L."/>
            <person name="Vallenet D."/>
            <person name="Barbe V."/>
            <person name="Cytryn E."/>
            <person name="Avarre J.-C."/>
            <person name="Jaubert M."/>
            <person name="Simon D."/>
            <person name="Cartieaux F."/>
            <person name="Prin Y."/>
            <person name="Bena G."/>
            <person name="Hannibal L."/>
            <person name="Fardoux J."/>
            <person name="Kojadinovic M."/>
            <person name="Vuillet L."/>
            <person name="Lajus A."/>
            <person name="Cruveiller S."/>
            <person name="Rouy Z."/>
            <person name="Mangenot S."/>
            <person name="Segurens B."/>
            <person name="Dossat C."/>
            <person name="Franck W.L."/>
            <person name="Chang W.-S."/>
            <person name="Saunders E."/>
            <person name="Bruce D."/>
            <person name="Richardson P."/>
            <person name="Normand P."/>
            <person name="Dreyfus B."/>
            <person name="Pignol D."/>
            <person name="Stacey G."/>
            <person name="Emerich D."/>
            <person name="Vermeglio A."/>
            <person name="Medigue C."/>
            <person name="Sadowsky M."/>
        </authorList>
    </citation>
    <scope>NUCLEOTIDE SEQUENCE [LARGE SCALE GENOMIC DNA]</scope>
    <source>
        <strain>ORS 278</strain>
    </source>
</reference>
<gene>
    <name evidence="1" type="primary">ubiG</name>
    <name type="ordered locus">BRADO0576</name>
</gene>
<comment type="function">
    <text evidence="1">O-methyltransferase that catalyzes the 2 O-methylation steps in the ubiquinone biosynthetic pathway.</text>
</comment>
<comment type="catalytic activity">
    <reaction evidence="1">
        <text>a 3-demethylubiquinol + S-adenosyl-L-methionine = a ubiquinol + S-adenosyl-L-homocysteine + H(+)</text>
        <dbReference type="Rhea" id="RHEA:44380"/>
        <dbReference type="Rhea" id="RHEA-COMP:9566"/>
        <dbReference type="Rhea" id="RHEA-COMP:10914"/>
        <dbReference type="ChEBI" id="CHEBI:15378"/>
        <dbReference type="ChEBI" id="CHEBI:17976"/>
        <dbReference type="ChEBI" id="CHEBI:57856"/>
        <dbReference type="ChEBI" id="CHEBI:59789"/>
        <dbReference type="ChEBI" id="CHEBI:84422"/>
        <dbReference type="EC" id="2.1.1.64"/>
    </reaction>
</comment>
<comment type="catalytic activity">
    <reaction evidence="1">
        <text>a 3-(all-trans-polyprenyl)benzene-1,2-diol + S-adenosyl-L-methionine = a 2-methoxy-6-(all-trans-polyprenyl)phenol + S-adenosyl-L-homocysteine + H(+)</text>
        <dbReference type="Rhea" id="RHEA:31411"/>
        <dbReference type="Rhea" id="RHEA-COMP:9550"/>
        <dbReference type="Rhea" id="RHEA-COMP:9551"/>
        <dbReference type="ChEBI" id="CHEBI:15378"/>
        <dbReference type="ChEBI" id="CHEBI:57856"/>
        <dbReference type="ChEBI" id="CHEBI:59789"/>
        <dbReference type="ChEBI" id="CHEBI:62729"/>
        <dbReference type="ChEBI" id="CHEBI:62731"/>
        <dbReference type="EC" id="2.1.1.222"/>
    </reaction>
</comment>
<comment type="pathway">
    <text evidence="1">Cofactor biosynthesis; ubiquinone biosynthesis.</text>
</comment>
<comment type="similarity">
    <text evidence="1">Belongs to the methyltransferase superfamily. UbiG/COQ3 family.</text>
</comment>